<proteinExistence type="evidence at protein level"/>
<sequence>VAPPQHLCGSHLVDALYLVCGDRGFFYNPKGIVEQCCHRPCNIFDLQNYCN</sequence>
<name>INS_PLATA</name>
<protein>
    <recommendedName>
        <fullName evidence="3">Insulin</fullName>
    </recommendedName>
    <component>
        <recommendedName>
            <fullName evidence="3">Insulin B chain</fullName>
        </recommendedName>
    </component>
    <component>
        <recommendedName>
            <fullName evidence="3">Insulin A chain</fullName>
        </recommendedName>
    </component>
</protein>
<keyword id="KW-0119">Carbohydrate metabolism</keyword>
<keyword id="KW-0903">Direct protein sequencing</keyword>
<keyword id="KW-1015">Disulfide bond</keyword>
<keyword id="KW-0313">Glucose metabolism</keyword>
<keyword id="KW-0372">Hormone</keyword>
<keyword id="KW-0964">Secreted</keyword>
<accession>C0HJU0</accession>
<dbReference type="SMR" id="C0HJU0"/>
<dbReference type="GO" id="GO:0005615">
    <property type="term" value="C:extracellular space"/>
    <property type="evidence" value="ECO:0007669"/>
    <property type="project" value="TreeGrafter"/>
</dbReference>
<dbReference type="GO" id="GO:0005179">
    <property type="term" value="F:hormone activity"/>
    <property type="evidence" value="ECO:0007669"/>
    <property type="project" value="UniProtKB-KW"/>
</dbReference>
<dbReference type="GO" id="GO:0006006">
    <property type="term" value="P:glucose metabolic process"/>
    <property type="evidence" value="ECO:0007669"/>
    <property type="project" value="UniProtKB-KW"/>
</dbReference>
<dbReference type="CDD" id="cd04367">
    <property type="entry name" value="IlGF_insulin_like"/>
    <property type="match status" value="1"/>
</dbReference>
<dbReference type="Gene3D" id="1.10.100.10">
    <property type="entry name" value="Insulin-like"/>
    <property type="match status" value="1"/>
</dbReference>
<dbReference type="InterPro" id="IPR004825">
    <property type="entry name" value="Insulin"/>
</dbReference>
<dbReference type="InterPro" id="IPR016179">
    <property type="entry name" value="Insulin-like"/>
</dbReference>
<dbReference type="InterPro" id="IPR036438">
    <property type="entry name" value="Insulin-like_sf"/>
</dbReference>
<dbReference type="InterPro" id="IPR022353">
    <property type="entry name" value="Insulin_CS"/>
</dbReference>
<dbReference type="InterPro" id="IPR022352">
    <property type="entry name" value="Insulin_family"/>
</dbReference>
<dbReference type="PANTHER" id="PTHR11454:SF9">
    <property type="entry name" value="INSULIN"/>
    <property type="match status" value="1"/>
</dbReference>
<dbReference type="PANTHER" id="PTHR11454">
    <property type="entry name" value="INSULIN/INSULIN GROWTH FACTOR"/>
    <property type="match status" value="1"/>
</dbReference>
<dbReference type="Pfam" id="PF00049">
    <property type="entry name" value="Insulin"/>
    <property type="match status" value="2"/>
</dbReference>
<dbReference type="PRINTS" id="PR00277">
    <property type="entry name" value="INSULIN"/>
</dbReference>
<dbReference type="PRINTS" id="PR00276">
    <property type="entry name" value="INSULINFAMLY"/>
</dbReference>
<dbReference type="SMART" id="SM00078">
    <property type="entry name" value="IlGF"/>
    <property type="match status" value="1"/>
</dbReference>
<dbReference type="SUPFAM" id="SSF56994">
    <property type="entry name" value="Insulin-like"/>
    <property type="match status" value="1"/>
</dbReference>
<dbReference type="PROSITE" id="PS00262">
    <property type="entry name" value="INSULIN"/>
    <property type="match status" value="1"/>
</dbReference>
<reference evidence="4" key="1">
    <citation type="journal article" date="2016" name="Gen. Comp. Endocrinol.">
        <title>Development of a widely applicable immunoassay for insulin in marine teleosts that regulates cross-reactivity using biotinylation and inhibits interference by plasma components.</title>
        <authorList>
            <person name="Andoh T."/>
        </authorList>
    </citation>
    <scope>PROTEIN SEQUENCE</scope>
    <scope>SUBCELLULAR LOCATION</scope>
    <source>
        <tissue evidence="3">Endocrine gland</tissue>
    </source>
</reference>
<evidence type="ECO:0000250" key="1">
    <source>
        <dbReference type="UniProtKB" id="P01317"/>
    </source>
</evidence>
<evidence type="ECO:0000269" key="2">
    <source>
    </source>
</evidence>
<evidence type="ECO:0000303" key="3">
    <source>
    </source>
</evidence>
<evidence type="ECO:0000305" key="4"/>
<organism>
    <name type="scientific">Platax teira</name>
    <name type="common">Longfin batfish</name>
    <dbReference type="NCBI Taxonomy" id="334891"/>
    <lineage>
        <taxon>Eukaryota</taxon>
        <taxon>Metazoa</taxon>
        <taxon>Chordata</taxon>
        <taxon>Craniata</taxon>
        <taxon>Vertebrata</taxon>
        <taxon>Euteleostomi</taxon>
        <taxon>Actinopterygii</taxon>
        <taxon>Neopterygii</taxon>
        <taxon>Teleostei</taxon>
        <taxon>Neoteleostei</taxon>
        <taxon>Acanthomorphata</taxon>
        <taxon>Eupercaria</taxon>
        <taxon>Ephippiformes</taxon>
        <taxon>Ephippidae</taxon>
        <taxon>Platax</taxon>
    </lineage>
</organism>
<gene>
    <name evidence="4" type="primary">ins</name>
</gene>
<feature type="peptide" id="PRO_0000438532" description="Insulin B chain" evidence="2">
    <location>
        <begin position="1"/>
        <end position="30"/>
    </location>
</feature>
<feature type="peptide" id="PRO_0000438533" description="Insulin A chain" evidence="2">
    <location>
        <begin position="31"/>
        <end position="51"/>
    </location>
</feature>
<feature type="disulfide bond" description="Interchain (between B and A chains)" evidence="1">
    <location>
        <begin position="8"/>
        <end position="37"/>
    </location>
</feature>
<feature type="disulfide bond" description="Interchain (between B and A chains)" evidence="1">
    <location>
        <begin position="20"/>
        <end position="50"/>
    </location>
</feature>
<feature type="disulfide bond" evidence="1">
    <location>
        <begin position="36"/>
        <end position="41"/>
    </location>
</feature>
<feature type="non-consecutive residues" evidence="3">
    <location>
        <begin position="30"/>
        <end position="31"/>
    </location>
</feature>
<comment type="function">
    <text evidence="4">Insulin decreases blood glucose concentration. It increases cell permeability to monosaccharides, amino acids and fatty acids. It accelerates glycolysis, the pentose phosphate cycle, and glycogen synthesis in liver.</text>
</comment>
<comment type="subunit">
    <text evidence="1">Heterodimer of a B chain and an A chain linked by two disulfide bonds.</text>
</comment>
<comment type="subcellular location">
    <subcellularLocation>
        <location evidence="2">Secreted</location>
    </subcellularLocation>
</comment>
<comment type="similarity">
    <text evidence="4">Belongs to the insulin family.</text>
</comment>